<comment type="function">
    <text evidence="1">Precursor of the catalytic component of the C3 and C5 convertase complexes of the alternative pathway of the complement system, a cascade of proteins that leads to phagocytosis and breakdown of pathogens and signaling that strengthens the adaptive immune system. The alternative complement pathway acts as an amplification loop that enhances other complement pathways (classical, lectin and GZMK) by promoting formation of additional C3 and C5 convertases. CFB is cleaved and activated by CFD to generate Ba and Bb chains; Bb chain constituting the catalytic component of the C3 and C5 convertases.</text>
</comment>
<comment type="function">
    <molecule>Complement factor B Bb</molecule>
    <text evidence="1">Serine protease component of the complement C3 and C5 convertase complexes of the alternative complement pathway. Following cleavage and activation by factor D (CFD), forms the C3 convertase together with complement C3b. As part of the C3 convertase, cleaves and activates C3 into C3a anaphylatoxin and C3b opsonin, the next components of the complement pathways. When an additional complement C3b molecule binds to the C3 convertase, forms the C5 convertase, which cleaves and activates C5 into C5a anaphylatoxin and C5b component of the membrane attack complex.</text>
</comment>
<comment type="function">
    <molecule>Complement factor B Ba</molecule>
    <text evidence="1">Involved in proliferation and differentiation of preactivated B-lymphocytes, rapid spreading of peripheral blood monocytes, stimulation of lymphocyte blastogenesis and lysis of erythrocytes.</text>
</comment>
<comment type="catalytic activity">
    <molecule>Complement factor B Bb</molecule>
    <reaction evidence="1">
        <text>Cleavage of Arg-|-Ser bond in complement component C3 alpha-chain to yield C3a and C3b, and Arg-|-Xaa bond in complement component C5 alpha-chain to yield C5a and C5b.</text>
        <dbReference type="EC" id="3.4.21.47"/>
    </reaction>
</comment>
<comment type="cofactor">
    <molecule>Complement factor B Bb</molecule>
    <cofactor evidence="1">
        <name>Mg(2+)</name>
        <dbReference type="ChEBI" id="CHEBI:18420"/>
    </cofactor>
    <cofactor evidence="1">
        <name>Mn(2+)</name>
        <dbReference type="ChEBI" id="CHEBI:29035"/>
    </cofactor>
</comment>
<comment type="subunit">
    <text evidence="1">Monomer. Interacts with complement C3b; this interaction is dependent on the presence of Mg(2+).</text>
</comment>
<comment type="subunit">
    <molecule>Complement factor B Bb</molecule>
    <text evidence="1">Catalytic component of the C3 convertase of the alternative complement pathway, also named C3bBb, composed of complement factor B Bb and complement C3b. Catalytic component of the C5 convertase of the alternative complement pathway, also named C3bBb3b, composed of complement factor B Bb and additional molecules of complement C3b. Interacts to CFP; this interaction contributes to the stabilization of the active C3-convertase enzyme complex.</text>
</comment>
<comment type="subcellular location">
    <subcellularLocation>
        <location evidence="1">Secreted</location>
    </subcellularLocation>
</comment>
<comment type="subcellular location">
    <molecule>Complement factor B Bb</molecule>
    <subcellularLocation>
        <location evidence="1">Cell surface</location>
    </subcellularLocation>
    <text evidence="1">Recruited to the surface of pathogens by complement C3b opsonin.</text>
</comment>
<comment type="domain">
    <text evidence="1">The unliganded VWA domain has an inactive 'locked' conformation whereby the scissile Arg-259|Lys-260 bond is protected from proteolytic activation.</text>
</comment>
<comment type="PTM">
    <text evidence="1">Cleaved by CFD following activation of the alternative complement system, generating Ba and Bb chains. Cleavage and activation takes place when CFB is already associated with complement C3b.</text>
</comment>
<comment type="similarity">
    <text evidence="4">Belongs to the peptidase S1 family.</text>
</comment>
<sequence>MGIGHNPRLCLVPLILGLLCGGVGMTPLPEAGPQSPCSLEGVEIKGGSFRLLKAGQVLEYLCPSGFYPYPTQIRTCRSTGSWSTLQTQDRKIVKRAECKAIRCPRPQDFENGEYWPRAAYYNLSDEISFRCYDGYTLRGSANRTCQGNGRWDGETAICDDGATYCPNPGIPLGTRKVGSQYRLEDRVTYYCNRGLTLRGSEQRTCLEGGSWSGTEPSCQDSFMYDTPAEVAEAFLSSLTETIEGVDAEDGHSPGEQQKRKIVLDPSGSMNIYLVLDGSDSVGAHNFTGAKNCLRDFIEKVASYGVKPKYGLVTYATEPKVLIRVSDPKSSEADWVTDQLNQINYADHKLKAGTNTKRALLEVYNMMSREVNQFKETWNRTRHVIIIMTDGLHNMGGDPVTVIHDIRYLLDIGRNRKNPREDYLDIYVFGVGPLVNQENINALASKKDKEKHVFKLQGMENLEDVFVQMLDESRTLGLCGMVWEHKDGTAYHKQPWQAKISVTRPSKGHESCMGAIVSEYFVLTAAHCFTVDDEKHSIKVSLGGQRKEWEVKEILFHPKYDLNAKKAKGIPEFYDYDVALVRLKEKLKYETTIRPICLPCTEGSIQALRLPRSTTCQQQMQELLPAKDIEALFVSESKKTLTRKAVYIKNGDKKASCERDALRAPGYEKVKDVSEVVTPRFLCTGGVDPYADPNTCKGDSGGPLIIHKRSRFIQVGVISWGVVDVCKRPQQVPGYARDFHINLYQVLPWLKEKLQNEDLGFL</sequence>
<evidence type="ECO:0000250" key="1">
    <source>
        <dbReference type="UniProtKB" id="P00751"/>
    </source>
</evidence>
<evidence type="ECO:0000255" key="2"/>
<evidence type="ECO:0000255" key="3">
    <source>
        <dbReference type="PROSITE-ProRule" id="PRU00219"/>
    </source>
</evidence>
<evidence type="ECO:0000255" key="4">
    <source>
        <dbReference type="PROSITE-ProRule" id="PRU00274"/>
    </source>
</evidence>
<evidence type="ECO:0000255" key="5">
    <source>
        <dbReference type="PROSITE-ProRule" id="PRU00302"/>
    </source>
</evidence>
<protein>
    <recommendedName>
        <fullName>Complement factor B</fullName>
        <ecNumber evidence="1">3.4.21.47</ecNumber>
    </recommendedName>
    <alternativeName>
        <fullName>C3/C5 convertase</fullName>
    </alternativeName>
    <alternativeName>
        <fullName>EC-VMFB</fullName>
    </alternativeName>
    <component>
        <recommendedName>
            <fullName>Complement factor B Ba</fullName>
        </recommendedName>
    </component>
    <component>
        <recommendedName>
            <fullName>Complement factor B Bb</fullName>
        </recommendedName>
    </component>
</protein>
<accession>P81187</accession>
<accession>Q2KIU6</accession>
<gene>
    <name type="primary">CFB</name>
    <name type="synonym">BF</name>
</gene>
<name>CFAB_BOVIN</name>
<reference key="1">
    <citation type="submission" date="2006-01" db="EMBL/GenBank/DDBJ databases">
        <authorList>
            <consortium name="NIH - Mammalian Gene Collection (MGC) project"/>
        </authorList>
    </citation>
    <scope>NUCLEOTIDE SEQUENCE [LARGE SCALE MRNA]</scope>
    <source>
        <strain>Hereford</strain>
        <tissue>Testis</tissue>
    </source>
</reference>
<reference key="2">
    <citation type="journal article" date="1997" name="Arch. Biochem. Biophys.">
        <title>Isolation from fetal bovine serum of a fragment b of complement factor B-like protein improving a long-term survival of human endothelial cells.</title>
        <authorList>
            <person name="Cai G."/>
            <person name="Satoh T."/>
            <person name="Hoshi H."/>
        </authorList>
    </citation>
    <scope>PROTEIN SEQUENCE OF 260-275</scope>
    <source>
        <tissue>Blood</tissue>
    </source>
</reference>
<proteinExistence type="evidence at protein level"/>
<organism>
    <name type="scientific">Bos taurus</name>
    <name type="common">Bovine</name>
    <dbReference type="NCBI Taxonomy" id="9913"/>
    <lineage>
        <taxon>Eukaryota</taxon>
        <taxon>Metazoa</taxon>
        <taxon>Chordata</taxon>
        <taxon>Craniata</taxon>
        <taxon>Vertebrata</taxon>
        <taxon>Euteleostomi</taxon>
        <taxon>Mammalia</taxon>
        <taxon>Eutheria</taxon>
        <taxon>Laurasiatheria</taxon>
        <taxon>Artiodactyla</taxon>
        <taxon>Ruminantia</taxon>
        <taxon>Pecora</taxon>
        <taxon>Bovidae</taxon>
        <taxon>Bovinae</taxon>
        <taxon>Bos</taxon>
    </lineage>
</organism>
<feature type="signal peptide" evidence="1">
    <location>
        <begin position="1"/>
        <end position="25"/>
    </location>
</feature>
<feature type="chain" id="PRO_0000285857" description="Complement factor B">
    <location>
        <begin position="26"/>
        <end position="761"/>
    </location>
</feature>
<feature type="chain" id="PRO_0000285858" description="Complement factor B Ba">
    <location>
        <begin position="26"/>
        <end position="259"/>
    </location>
</feature>
<feature type="chain" id="PRO_0000027541" description="Complement factor B Bb">
    <location>
        <begin position="260"/>
        <end position="761"/>
    </location>
</feature>
<feature type="domain" description="Sushi 1" evidence="5">
    <location>
        <begin position="35"/>
        <end position="100"/>
    </location>
</feature>
<feature type="domain" description="Sushi 2" evidence="5">
    <location>
        <begin position="101"/>
        <end position="160"/>
    </location>
</feature>
<feature type="domain" description="Sushi 3" evidence="5">
    <location>
        <begin position="163"/>
        <end position="220"/>
    </location>
</feature>
<feature type="domain" description="VWFA" evidence="3">
    <location>
        <begin position="270"/>
        <end position="469"/>
    </location>
</feature>
<feature type="domain" description="Peptidase S1" evidence="4">
    <location>
        <begin position="477"/>
        <end position="754"/>
    </location>
</feature>
<feature type="active site" description="Charge relay system" evidence="4">
    <location>
        <position position="526"/>
    </location>
</feature>
<feature type="active site" description="Charge relay system" evidence="4">
    <location>
        <position position="576"/>
    </location>
</feature>
<feature type="active site" description="Charge relay system" evidence="4">
    <location>
        <position position="699"/>
    </location>
</feature>
<feature type="binding site" evidence="1">
    <location>
        <position position="278"/>
    </location>
    <ligand>
        <name>Mg(2+)</name>
        <dbReference type="ChEBI" id="CHEBI:18420"/>
    </ligand>
</feature>
<feature type="binding site" evidence="1">
    <location>
        <position position="280"/>
    </location>
    <ligand>
        <name>Mg(2+)</name>
        <dbReference type="ChEBI" id="CHEBI:18420"/>
    </ligand>
</feature>
<feature type="binding site" evidence="1">
    <location>
        <position position="353"/>
    </location>
    <ligand>
        <name>Mg(2+)</name>
        <dbReference type="ChEBI" id="CHEBI:18420"/>
    </ligand>
</feature>
<feature type="site" description="Cleavage; by CFD" evidence="1">
    <location>
        <begin position="259"/>
        <end position="260"/>
    </location>
</feature>
<feature type="glycosylation site" description="N-linked (GlcNAc...) asparagine" evidence="2">
    <location>
        <position position="122"/>
    </location>
</feature>
<feature type="glycosylation site" description="N-linked (GlcNAc...) asparagine" evidence="2">
    <location>
        <position position="142"/>
    </location>
</feature>
<feature type="glycosylation site" description="N-linked (GlcNAc...) asparagine" evidence="2">
    <location>
        <position position="285"/>
    </location>
</feature>
<feature type="glycosylation site" description="N-linked (GlcNAc...) asparagine" evidence="2">
    <location>
        <position position="378"/>
    </location>
</feature>
<feature type="disulfide bond" evidence="4">
    <location>
        <begin position="37"/>
        <end position="76"/>
    </location>
</feature>
<feature type="disulfide bond" evidence="4">
    <location>
        <begin position="62"/>
        <end position="98"/>
    </location>
</feature>
<feature type="disulfide bond" evidence="4">
    <location>
        <begin position="103"/>
        <end position="145"/>
    </location>
</feature>
<feature type="disulfide bond" evidence="4">
    <location>
        <begin position="131"/>
        <end position="158"/>
    </location>
</feature>
<feature type="disulfide bond" evidence="4">
    <location>
        <begin position="165"/>
        <end position="205"/>
    </location>
</feature>
<feature type="disulfide bond" evidence="4">
    <location>
        <begin position="191"/>
        <end position="218"/>
    </location>
</feature>
<feature type="disulfide bond" evidence="1">
    <location>
        <begin position="478"/>
        <end position="596"/>
    </location>
</feature>
<feature type="disulfide bond" evidence="4">
    <location>
        <begin position="511"/>
        <end position="527"/>
    </location>
</feature>
<feature type="disulfide bond" evidence="1">
    <location>
        <begin position="599"/>
        <end position="615"/>
    </location>
</feature>
<feature type="disulfide bond" evidence="1">
    <location>
        <begin position="656"/>
        <end position="682"/>
    </location>
</feature>
<feature type="disulfide bond" evidence="4">
    <location>
        <begin position="695"/>
        <end position="725"/>
    </location>
</feature>
<keyword id="KW-0165">Cleavage on pair of basic residues</keyword>
<keyword id="KW-0179">Complement alternate pathway</keyword>
<keyword id="KW-0903">Direct protein sequencing</keyword>
<keyword id="KW-1015">Disulfide bond</keyword>
<keyword id="KW-0325">Glycoprotein</keyword>
<keyword id="KW-0378">Hydrolase</keyword>
<keyword id="KW-0391">Immunity</keyword>
<keyword id="KW-0399">Innate immunity</keyword>
<keyword id="KW-0460">Magnesium</keyword>
<keyword id="KW-0479">Metal-binding</keyword>
<keyword id="KW-0645">Protease</keyword>
<keyword id="KW-1185">Reference proteome</keyword>
<keyword id="KW-0677">Repeat</keyword>
<keyword id="KW-0964">Secreted</keyword>
<keyword id="KW-0720">Serine protease</keyword>
<keyword id="KW-0732">Signal</keyword>
<keyword id="KW-0768">Sushi</keyword>
<keyword id="KW-0865">Zymogen</keyword>
<dbReference type="EC" id="3.4.21.47" evidence="1"/>
<dbReference type="EMBL" id="BC112504">
    <property type="protein sequence ID" value="AAI12505.1"/>
    <property type="molecule type" value="mRNA"/>
</dbReference>
<dbReference type="RefSeq" id="NP_001035616.1">
    <property type="nucleotide sequence ID" value="NM_001040526.1"/>
</dbReference>
<dbReference type="SMR" id="P81187"/>
<dbReference type="FunCoup" id="P81187">
    <property type="interactions" value="150"/>
</dbReference>
<dbReference type="STRING" id="9913.ENSBTAP00000009800"/>
<dbReference type="MEROPS" id="S01.196"/>
<dbReference type="GlyCosmos" id="P81187">
    <property type="glycosylation" value="4 sites, No reported glycans"/>
</dbReference>
<dbReference type="GlyGen" id="P81187">
    <property type="glycosylation" value="4 sites"/>
</dbReference>
<dbReference type="PaxDb" id="9913-ENSBTAP00000009800"/>
<dbReference type="PeptideAtlas" id="P81187"/>
<dbReference type="Ensembl" id="ENSBTAT00000009800.4">
    <property type="protein sequence ID" value="ENSBTAP00000009800.3"/>
    <property type="gene ID" value="ENSBTAG00000046158.3"/>
</dbReference>
<dbReference type="GeneID" id="514076"/>
<dbReference type="KEGG" id="bta:514076"/>
<dbReference type="CTD" id="629"/>
<dbReference type="VEuPathDB" id="HostDB:ENSBTAG00000046158"/>
<dbReference type="VGNC" id="VGNC:107285">
    <property type="gene designation" value="CFB"/>
</dbReference>
<dbReference type="eggNOG" id="KOG3627">
    <property type="taxonomic scope" value="Eukaryota"/>
</dbReference>
<dbReference type="GeneTree" id="ENSGT00940000158605"/>
<dbReference type="HOGENOM" id="CLU_022004_1_0_1"/>
<dbReference type="InParanoid" id="P81187"/>
<dbReference type="OMA" id="PQKGHEN"/>
<dbReference type="OrthoDB" id="6127264at2759"/>
<dbReference type="TreeFam" id="TF330194"/>
<dbReference type="Reactome" id="R-BTA-173736">
    <property type="pathway name" value="Alternative complement activation"/>
</dbReference>
<dbReference type="Reactome" id="R-BTA-174577">
    <property type="pathway name" value="Activation of C3 and C5"/>
</dbReference>
<dbReference type="Reactome" id="R-BTA-977606">
    <property type="pathway name" value="Regulation of Complement cascade"/>
</dbReference>
<dbReference type="Proteomes" id="UP000009136">
    <property type="component" value="Chromosome 23"/>
</dbReference>
<dbReference type="Bgee" id="ENSBTAG00000046158">
    <property type="expression patterns" value="Expressed in liver and 102 other cell types or tissues"/>
</dbReference>
<dbReference type="GO" id="GO:0005576">
    <property type="term" value="C:extracellular region"/>
    <property type="evidence" value="ECO:0007669"/>
    <property type="project" value="UniProtKB-SubCell"/>
</dbReference>
<dbReference type="GO" id="GO:0004252">
    <property type="term" value="F:serine-type endopeptidase activity"/>
    <property type="evidence" value="ECO:0007669"/>
    <property type="project" value="UniProtKB-EC"/>
</dbReference>
<dbReference type="GO" id="GO:0006956">
    <property type="term" value="P:complement activation"/>
    <property type="evidence" value="ECO:0000318"/>
    <property type="project" value="GO_Central"/>
</dbReference>
<dbReference type="GO" id="GO:0006957">
    <property type="term" value="P:complement activation, alternative pathway"/>
    <property type="evidence" value="ECO:0007669"/>
    <property type="project" value="UniProtKB-KW"/>
</dbReference>
<dbReference type="GO" id="GO:0006508">
    <property type="term" value="P:proteolysis"/>
    <property type="evidence" value="ECO:0007669"/>
    <property type="project" value="UniProtKB-KW"/>
</dbReference>
<dbReference type="GO" id="GO:0009617">
    <property type="term" value="P:response to bacterium"/>
    <property type="evidence" value="ECO:0000318"/>
    <property type="project" value="GO_Central"/>
</dbReference>
<dbReference type="CDD" id="cd00033">
    <property type="entry name" value="CCP"/>
    <property type="match status" value="3"/>
</dbReference>
<dbReference type="CDD" id="cd00190">
    <property type="entry name" value="Tryp_SPc"/>
    <property type="match status" value="1"/>
</dbReference>
<dbReference type="CDD" id="cd01470">
    <property type="entry name" value="vWA_complement_factors"/>
    <property type="match status" value="1"/>
</dbReference>
<dbReference type="FunFam" id="2.10.70.10:FF:000052">
    <property type="entry name" value="Complement factor B"/>
    <property type="match status" value="1"/>
</dbReference>
<dbReference type="FunFam" id="3.40.50.410:FF:000056">
    <property type="entry name" value="Complement factor B"/>
    <property type="match status" value="1"/>
</dbReference>
<dbReference type="FunFam" id="2.10.70.10:FF:000019">
    <property type="entry name" value="Complement factor b,-like"/>
    <property type="match status" value="2"/>
</dbReference>
<dbReference type="Gene3D" id="2.40.10.120">
    <property type="match status" value="1"/>
</dbReference>
<dbReference type="Gene3D" id="2.10.70.10">
    <property type="entry name" value="Complement Module, domain 1"/>
    <property type="match status" value="3"/>
</dbReference>
<dbReference type="Gene3D" id="3.40.50.410">
    <property type="entry name" value="von Willebrand factor, type A domain"/>
    <property type="match status" value="1"/>
</dbReference>
<dbReference type="InterPro" id="IPR011360">
    <property type="entry name" value="Compl_C2_B"/>
</dbReference>
<dbReference type="InterPro" id="IPR009003">
    <property type="entry name" value="Peptidase_S1_PA"/>
</dbReference>
<dbReference type="InterPro" id="IPR001314">
    <property type="entry name" value="Peptidase_S1A"/>
</dbReference>
<dbReference type="InterPro" id="IPR035976">
    <property type="entry name" value="Sushi/SCR/CCP_sf"/>
</dbReference>
<dbReference type="InterPro" id="IPR000436">
    <property type="entry name" value="Sushi_SCR_CCP_dom"/>
</dbReference>
<dbReference type="InterPro" id="IPR001254">
    <property type="entry name" value="Trypsin_dom"/>
</dbReference>
<dbReference type="InterPro" id="IPR018114">
    <property type="entry name" value="TRYPSIN_HIS"/>
</dbReference>
<dbReference type="InterPro" id="IPR033116">
    <property type="entry name" value="TRYPSIN_SER"/>
</dbReference>
<dbReference type="InterPro" id="IPR002035">
    <property type="entry name" value="VWF_A"/>
</dbReference>
<dbReference type="InterPro" id="IPR036465">
    <property type="entry name" value="vWFA_dom_sf"/>
</dbReference>
<dbReference type="PANTHER" id="PTHR46393:SF1">
    <property type="entry name" value="COMPLEMENT FACTOR B"/>
    <property type="match status" value="1"/>
</dbReference>
<dbReference type="PANTHER" id="PTHR46393">
    <property type="entry name" value="SUSHI DOMAIN-CONTAINING PROTEIN"/>
    <property type="match status" value="1"/>
</dbReference>
<dbReference type="Pfam" id="PF00084">
    <property type="entry name" value="Sushi"/>
    <property type="match status" value="3"/>
</dbReference>
<dbReference type="Pfam" id="PF00089">
    <property type="entry name" value="Trypsin"/>
    <property type="match status" value="1"/>
</dbReference>
<dbReference type="Pfam" id="PF00092">
    <property type="entry name" value="VWA"/>
    <property type="match status" value="1"/>
</dbReference>
<dbReference type="PIRSF" id="PIRSF001154">
    <property type="entry name" value="Compl_C2_B"/>
    <property type="match status" value="1"/>
</dbReference>
<dbReference type="PRINTS" id="PR00722">
    <property type="entry name" value="CHYMOTRYPSIN"/>
</dbReference>
<dbReference type="PRINTS" id="PR00453">
    <property type="entry name" value="VWFADOMAIN"/>
</dbReference>
<dbReference type="SMART" id="SM00032">
    <property type="entry name" value="CCP"/>
    <property type="match status" value="3"/>
</dbReference>
<dbReference type="SMART" id="SM00020">
    <property type="entry name" value="Tryp_SPc"/>
    <property type="match status" value="1"/>
</dbReference>
<dbReference type="SMART" id="SM00327">
    <property type="entry name" value="VWA"/>
    <property type="match status" value="1"/>
</dbReference>
<dbReference type="SUPFAM" id="SSF57535">
    <property type="entry name" value="Complement control module/SCR domain"/>
    <property type="match status" value="3"/>
</dbReference>
<dbReference type="SUPFAM" id="SSF50494">
    <property type="entry name" value="Trypsin-like serine proteases"/>
    <property type="match status" value="1"/>
</dbReference>
<dbReference type="SUPFAM" id="SSF53300">
    <property type="entry name" value="vWA-like"/>
    <property type="match status" value="1"/>
</dbReference>
<dbReference type="PROSITE" id="PS50923">
    <property type="entry name" value="SUSHI"/>
    <property type="match status" value="3"/>
</dbReference>
<dbReference type="PROSITE" id="PS50240">
    <property type="entry name" value="TRYPSIN_DOM"/>
    <property type="match status" value="1"/>
</dbReference>
<dbReference type="PROSITE" id="PS00134">
    <property type="entry name" value="TRYPSIN_HIS"/>
    <property type="match status" value="1"/>
</dbReference>
<dbReference type="PROSITE" id="PS00135">
    <property type="entry name" value="TRYPSIN_SER"/>
    <property type="match status" value="1"/>
</dbReference>
<dbReference type="PROSITE" id="PS50234">
    <property type="entry name" value="VWFA"/>
    <property type="match status" value="1"/>
</dbReference>